<proteinExistence type="inferred from homology"/>
<reference key="1">
    <citation type="journal article" date="2001" name="Nucleic Acids Res.">
        <title>The complete genome sequence of the murine respiratory pathogen Mycoplasma pulmonis.</title>
        <authorList>
            <person name="Chambaud I."/>
            <person name="Heilig R."/>
            <person name="Ferris S."/>
            <person name="Barbe V."/>
            <person name="Samson D."/>
            <person name="Galisson F."/>
            <person name="Moszer I."/>
            <person name="Dybvig K."/>
            <person name="Wroblewski H."/>
            <person name="Viari A."/>
            <person name="Rocha E.P.C."/>
            <person name="Blanchard A."/>
        </authorList>
    </citation>
    <scope>NUCLEOTIDE SEQUENCE [LARGE SCALE GENOMIC DNA]</scope>
    <source>
        <strain>UAB CTIP</strain>
    </source>
</reference>
<evidence type="ECO:0000250" key="1"/>
<evidence type="ECO:0000305" key="2"/>
<feature type="chain" id="PRO_0000136206" description="Histidine--tRNA ligase">
    <location>
        <begin position="1"/>
        <end position="420"/>
    </location>
</feature>
<name>SYH_MYCPU</name>
<keyword id="KW-0030">Aminoacyl-tRNA synthetase</keyword>
<keyword id="KW-0067">ATP-binding</keyword>
<keyword id="KW-0963">Cytoplasm</keyword>
<keyword id="KW-0436">Ligase</keyword>
<keyword id="KW-0547">Nucleotide-binding</keyword>
<keyword id="KW-0648">Protein biosynthesis</keyword>
<keyword id="KW-1185">Reference proteome</keyword>
<accession>Q98QM8</accession>
<protein>
    <recommendedName>
        <fullName>Histidine--tRNA ligase</fullName>
        <ecNumber>6.1.1.21</ecNumber>
    </recommendedName>
    <alternativeName>
        <fullName>Histidyl-tRNA synthetase</fullName>
        <shortName>HisRS</shortName>
    </alternativeName>
</protein>
<organism>
    <name type="scientific">Mycoplasmopsis pulmonis (strain UAB CTIP)</name>
    <name type="common">Mycoplasma pulmonis</name>
    <dbReference type="NCBI Taxonomy" id="272635"/>
    <lineage>
        <taxon>Bacteria</taxon>
        <taxon>Bacillati</taxon>
        <taxon>Mycoplasmatota</taxon>
        <taxon>Mycoplasmoidales</taxon>
        <taxon>Metamycoplasmataceae</taxon>
        <taxon>Mycoplasmopsis</taxon>
    </lineage>
</organism>
<dbReference type="EC" id="6.1.1.21"/>
<dbReference type="EMBL" id="AL445564">
    <property type="protein sequence ID" value="CAC13506.1"/>
    <property type="molecule type" value="Genomic_DNA"/>
</dbReference>
<dbReference type="PIR" id="E90553">
    <property type="entry name" value="E90553"/>
</dbReference>
<dbReference type="RefSeq" id="WP_010925137.1">
    <property type="nucleotide sequence ID" value="NC_002771.1"/>
</dbReference>
<dbReference type="SMR" id="Q98QM8"/>
<dbReference type="STRING" id="272635.gene:17576924"/>
<dbReference type="KEGG" id="mpu:MYPU_3330"/>
<dbReference type="eggNOG" id="COG0124">
    <property type="taxonomic scope" value="Bacteria"/>
</dbReference>
<dbReference type="HOGENOM" id="CLU_025113_1_2_14"/>
<dbReference type="BioCyc" id="MPUL272635:G1GT6-333-MONOMER"/>
<dbReference type="Proteomes" id="UP000000528">
    <property type="component" value="Chromosome"/>
</dbReference>
<dbReference type="GO" id="GO:0005737">
    <property type="term" value="C:cytoplasm"/>
    <property type="evidence" value="ECO:0007669"/>
    <property type="project" value="UniProtKB-SubCell"/>
</dbReference>
<dbReference type="GO" id="GO:0005524">
    <property type="term" value="F:ATP binding"/>
    <property type="evidence" value="ECO:0007669"/>
    <property type="project" value="UniProtKB-UniRule"/>
</dbReference>
<dbReference type="GO" id="GO:0004821">
    <property type="term" value="F:histidine-tRNA ligase activity"/>
    <property type="evidence" value="ECO:0007669"/>
    <property type="project" value="UniProtKB-UniRule"/>
</dbReference>
<dbReference type="GO" id="GO:0006427">
    <property type="term" value="P:histidyl-tRNA aminoacylation"/>
    <property type="evidence" value="ECO:0007669"/>
    <property type="project" value="UniProtKB-UniRule"/>
</dbReference>
<dbReference type="CDD" id="cd00773">
    <property type="entry name" value="HisRS-like_core"/>
    <property type="match status" value="1"/>
</dbReference>
<dbReference type="Gene3D" id="3.30.930.10">
    <property type="entry name" value="Bira Bifunctional Protein, Domain 2"/>
    <property type="match status" value="1"/>
</dbReference>
<dbReference type="HAMAP" id="MF_00127">
    <property type="entry name" value="His_tRNA_synth"/>
    <property type="match status" value="1"/>
</dbReference>
<dbReference type="InterPro" id="IPR045864">
    <property type="entry name" value="aa-tRNA-synth_II/BPL/LPL"/>
</dbReference>
<dbReference type="InterPro" id="IPR015807">
    <property type="entry name" value="His-tRNA-ligase"/>
</dbReference>
<dbReference type="InterPro" id="IPR041715">
    <property type="entry name" value="HisRS-like_core"/>
</dbReference>
<dbReference type="InterPro" id="IPR004516">
    <property type="entry name" value="HisRS/HisZ"/>
</dbReference>
<dbReference type="NCBIfam" id="TIGR00442">
    <property type="entry name" value="hisS"/>
    <property type="match status" value="1"/>
</dbReference>
<dbReference type="PANTHER" id="PTHR43707:SF1">
    <property type="entry name" value="HISTIDINE--TRNA LIGASE, MITOCHONDRIAL-RELATED"/>
    <property type="match status" value="1"/>
</dbReference>
<dbReference type="PANTHER" id="PTHR43707">
    <property type="entry name" value="HISTIDYL-TRNA SYNTHETASE"/>
    <property type="match status" value="1"/>
</dbReference>
<dbReference type="Pfam" id="PF13393">
    <property type="entry name" value="tRNA-synt_His"/>
    <property type="match status" value="1"/>
</dbReference>
<dbReference type="PIRSF" id="PIRSF001549">
    <property type="entry name" value="His-tRNA_synth"/>
    <property type="match status" value="1"/>
</dbReference>
<dbReference type="SUPFAM" id="SSF55681">
    <property type="entry name" value="Class II aaRS and biotin synthetases"/>
    <property type="match status" value="1"/>
</dbReference>
<sequence length="420" mass="49308">MKFQKLKGTRDYYFQDSNKLEIIRNAFFTSAKKFNFSFLETPIIENVELFKRTSGDFSDLVKKELYSFEDKSKRQIALRPEGTAPALRAIVENNLLQKHNKFFYFGPMFRYENPQKGRQRQFFSGGIEWLEKQSPFTNIEIIFFAKNFLDTLKIDDYEIVINWIGHPEQRKNYLDHLKNYLNQFENQLEEISKERLKNNALRILDDKIESQKAFVKNAPKIHDFLPKESLENFYQLQDLFKKFDIKFKVDPFLVRGLDYYSDFVFEFVSTNQNLGAQKTLLGGGVYSSLLKELGGENIEGIGFGFGLERIMEVIDLNNFKDDAKKITAFASNEDDLIALLKLRNNFGDLIKIDCINKVVNFKKIFKSKQIKESDFLIFKELNNAQNEVSLKNKFNDQKLVVDLINPNIENIKKYIKENSD</sequence>
<gene>
    <name type="primary">hisS</name>
    <name type="ordered locus">MYPU_3330</name>
</gene>
<comment type="catalytic activity">
    <reaction>
        <text>tRNA(His) + L-histidine + ATP = L-histidyl-tRNA(His) + AMP + diphosphate + H(+)</text>
        <dbReference type="Rhea" id="RHEA:17313"/>
        <dbReference type="Rhea" id="RHEA-COMP:9665"/>
        <dbReference type="Rhea" id="RHEA-COMP:9689"/>
        <dbReference type="ChEBI" id="CHEBI:15378"/>
        <dbReference type="ChEBI" id="CHEBI:30616"/>
        <dbReference type="ChEBI" id="CHEBI:33019"/>
        <dbReference type="ChEBI" id="CHEBI:57595"/>
        <dbReference type="ChEBI" id="CHEBI:78442"/>
        <dbReference type="ChEBI" id="CHEBI:78527"/>
        <dbReference type="ChEBI" id="CHEBI:456215"/>
        <dbReference type="EC" id="6.1.1.21"/>
    </reaction>
</comment>
<comment type="subunit">
    <text evidence="1">Homodimer.</text>
</comment>
<comment type="subcellular location">
    <subcellularLocation>
        <location evidence="1">Cytoplasm</location>
    </subcellularLocation>
</comment>
<comment type="similarity">
    <text evidence="2">Belongs to the class-II aminoacyl-tRNA synthetase family.</text>
</comment>